<comment type="similarity">
    <text evidence="1">Belongs to the bacterial ribosomal protein bL32 family.</text>
</comment>
<gene>
    <name evidence="1" type="primary">rpmF</name>
    <name type="ordered locus">RPR_03005</name>
</gene>
<reference key="1">
    <citation type="journal article" date="2009" name="PLoS ONE">
        <title>Genome sequence of the endosymbiont Rickettsia peacockii and comparison with virulent Rickettsia rickettsii: identification of virulence factors.</title>
        <authorList>
            <person name="Felsheim R.F."/>
            <person name="Kurtti T.J."/>
            <person name="Munderloh U.G."/>
        </authorList>
    </citation>
    <scope>NUCLEOTIDE SEQUENCE [LARGE SCALE GENOMIC DNA]</scope>
    <source>
        <strain>Rustic</strain>
    </source>
</reference>
<organism>
    <name type="scientific">Rickettsia peacockii (strain Rustic)</name>
    <dbReference type="NCBI Taxonomy" id="562019"/>
    <lineage>
        <taxon>Bacteria</taxon>
        <taxon>Pseudomonadati</taxon>
        <taxon>Pseudomonadota</taxon>
        <taxon>Alphaproteobacteria</taxon>
        <taxon>Rickettsiales</taxon>
        <taxon>Rickettsiaceae</taxon>
        <taxon>Rickettsieae</taxon>
        <taxon>Rickettsia</taxon>
        <taxon>spotted fever group</taxon>
    </lineage>
</organism>
<proteinExistence type="inferred from homology"/>
<feature type="chain" id="PRO_1000205271" description="Large ribosomal subunit protein bL32">
    <location>
        <begin position="1"/>
        <end position="66"/>
    </location>
</feature>
<name>RL32_RICPU</name>
<dbReference type="EMBL" id="CP001227">
    <property type="protein sequence ID" value="ACR47392.1"/>
    <property type="molecule type" value="Genomic_DNA"/>
</dbReference>
<dbReference type="RefSeq" id="WP_004997395.1">
    <property type="nucleotide sequence ID" value="NC_012730.1"/>
</dbReference>
<dbReference type="SMR" id="C4K1E1"/>
<dbReference type="GeneID" id="95361611"/>
<dbReference type="KEGG" id="rpk:RPR_03005"/>
<dbReference type="HOGENOM" id="CLU_129084_2_0_5"/>
<dbReference type="Proteomes" id="UP000005015">
    <property type="component" value="Chromosome"/>
</dbReference>
<dbReference type="GO" id="GO:0015934">
    <property type="term" value="C:large ribosomal subunit"/>
    <property type="evidence" value="ECO:0007669"/>
    <property type="project" value="InterPro"/>
</dbReference>
<dbReference type="GO" id="GO:0003735">
    <property type="term" value="F:structural constituent of ribosome"/>
    <property type="evidence" value="ECO:0007669"/>
    <property type="project" value="InterPro"/>
</dbReference>
<dbReference type="GO" id="GO:0006412">
    <property type="term" value="P:translation"/>
    <property type="evidence" value="ECO:0007669"/>
    <property type="project" value="UniProtKB-UniRule"/>
</dbReference>
<dbReference type="Gene3D" id="1.20.5.640">
    <property type="entry name" value="Single helix bin"/>
    <property type="match status" value="1"/>
</dbReference>
<dbReference type="HAMAP" id="MF_00340">
    <property type="entry name" value="Ribosomal_bL32"/>
    <property type="match status" value="1"/>
</dbReference>
<dbReference type="InterPro" id="IPR002677">
    <property type="entry name" value="Ribosomal_bL32"/>
</dbReference>
<dbReference type="InterPro" id="IPR044957">
    <property type="entry name" value="Ribosomal_bL32_bact"/>
</dbReference>
<dbReference type="InterPro" id="IPR011332">
    <property type="entry name" value="Ribosomal_zn-bd"/>
</dbReference>
<dbReference type="NCBIfam" id="TIGR01031">
    <property type="entry name" value="rpmF_bact"/>
    <property type="match status" value="1"/>
</dbReference>
<dbReference type="PANTHER" id="PTHR35534">
    <property type="entry name" value="50S RIBOSOMAL PROTEIN L32"/>
    <property type="match status" value="1"/>
</dbReference>
<dbReference type="PANTHER" id="PTHR35534:SF1">
    <property type="entry name" value="LARGE RIBOSOMAL SUBUNIT PROTEIN BL32"/>
    <property type="match status" value="1"/>
</dbReference>
<dbReference type="Pfam" id="PF01783">
    <property type="entry name" value="Ribosomal_L32p"/>
    <property type="match status" value="1"/>
</dbReference>
<dbReference type="SUPFAM" id="SSF57829">
    <property type="entry name" value="Zn-binding ribosomal proteins"/>
    <property type="match status" value="1"/>
</dbReference>
<keyword id="KW-0687">Ribonucleoprotein</keyword>
<keyword id="KW-0689">Ribosomal protein</keyword>
<protein>
    <recommendedName>
        <fullName evidence="1">Large ribosomal subunit protein bL32</fullName>
    </recommendedName>
    <alternativeName>
        <fullName evidence="2">50S ribosomal protein L32</fullName>
    </alternativeName>
</protein>
<accession>C4K1E1</accession>
<sequence length="66" mass="7488">MAVPKKKTSKSRRNMRRSHLALGKVNVIVDSQTGEYKLPHHVSLVDGTYNNRLVVTKKIKTEEEVA</sequence>
<evidence type="ECO:0000255" key="1">
    <source>
        <dbReference type="HAMAP-Rule" id="MF_00340"/>
    </source>
</evidence>
<evidence type="ECO:0000305" key="2"/>